<gene>
    <name evidence="1" type="primary">hisG</name>
    <name type="ordered locus">CCNA_03626</name>
</gene>
<comment type="function">
    <text evidence="1">Catalyzes the condensation of ATP and 5-phosphoribose 1-diphosphate to form N'-(5'-phosphoribosyl)-ATP (PR-ATP). Has a crucial role in the pathway because the rate of histidine biosynthesis seems to be controlled primarily by regulation of HisG enzymatic activity.</text>
</comment>
<comment type="catalytic activity">
    <reaction evidence="1">
        <text>1-(5-phospho-beta-D-ribosyl)-ATP + diphosphate = 5-phospho-alpha-D-ribose 1-diphosphate + ATP</text>
        <dbReference type="Rhea" id="RHEA:18473"/>
        <dbReference type="ChEBI" id="CHEBI:30616"/>
        <dbReference type="ChEBI" id="CHEBI:33019"/>
        <dbReference type="ChEBI" id="CHEBI:58017"/>
        <dbReference type="ChEBI" id="CHEBI:73183"/>
        <dbReference type="EC" id="2.4.2.17"/>
    </reaction>
</comment>
<comment type="cofactor">
    <cofactor evidence="1">
        <name>Mg(2+)</name>
        <dbReference type="ChEBI" id="CHEBI:18420"/>
    </cofactor>
</comment>
<comment type="activity regulation">
    <text evidence="1">Feedback inhibited by histidine.</text>
</comment>
<comment type="pathway">
    <text evidence="1">Amino-acid biosynthesis; L-histidine biosynthesis; L-histidine from 5-phospho-alpha-D-ribose 1-diphosphate: step 1/9.</text>
</comment>
<comment type="subcellular location">
    <subcellularLocation>
        <location evidence="1">Cytoplasm</location>
    </subcellularLocation>
</comment>
<comment type="similarity">
    <text evidence="1">Belongs to the ATP phosphoribosyltransferase family. Long subfamily.</text>
</comment>
<name>HIS1_CAUVN</name>
<feature type="chain" id="PRO_1000118248" description="ATP phosphoribosyltransferase">
    <location>
        <begin position="1"/>
        <end position="320"/>
    </location>
</feature>
<keyword id="KW-0028">Amino-acid biosynthesis</keyword>
<keyword id="KW-0067">ATP-binding</keyword>
<keyword id="KW-0963">Cytoplasm</keyword>
<keyword id="KW-0328">Glycosyltransferase</keyword>
<keyword id="KW-0368">Histidine biosynthesis</keyword>
<keyword id="KW-0460">Magnesium</keyword>
<keyword id="KW-0479">Metal-binding</keyword>
<keyword id="KW-0547">Nucleotide-binding</keyword>
<keyword id="KW-1185">Reference proteome</keyword>
<keyword id="KW-0808">Transferase</keyword>
<dbReference type="EC" id="2.4.2.17" evidence="1"/>
<dbReference type="EMBL" id="CP001340">
    <property type="protein sequence ID" value="ACL97091.1"/>
    <property type="molecule type" value="Genomic_DNA"/>
</dbReference>
<dbReference type="RefSeq" id="WP_010921340.1">
    <property type="nucleotide sequence ID" value="NC_011916.1"/>
</dbReference>
<dbReference type="RefSeq" id="YP_002518999.1">
    <property type="nucleotide sequence ID" value="NC_011916.1"/>
</dbReference>
<dbReference type="SMR" id="B8H5P6"/>
<dbReference type="GeneID" id="7329710"/>
<dbReference type="KEGG" id="ccs:CCNA_03626"/>
<dbReference type="PATRIC" id="fig|565050.3.peg.3539"/>
<dbReference type="HOGENOM" id="CLU_038115_0_1_5"/>
<dbReference type="OrthoDB" id="9806435at2"/>
<dbReference type="PhylomeDB" id="B8H5P6"/>
<dbReference type="UniPathway" id="UPA00031">
    <property type="reaction ID" value="UER00006"/>
</dbReference>
<dbReference type="Proteomes" id="UP000001364">
    <property type="component" value="Chromosome"/>
</dbReference>
<dbReference type="GO" id="GO:0005737">
    <property type="term" value="C:cytoplasm"/>
    <property type="evidence" value="ECO:0007669"/>
    <property type="project" value="UniProtKB-SubCell"/>
</dbReference>
<dbReference type="GO" id="GO:0005524">
    <property type="term" value="F:ATP binding"/>
    <property type="evidence" value="ECO:0007669"/>
    <property type="project" value="UniProtKB-KW"/>
</dbReference>
<dbReference type="GO" id="GO:0003879">
    <property type="term" value="F:ATP phosphoribosyltransferase activity"/>
    <property type="evidence" value="ECO:0007669"/>
    <property type="project" value="UniProtKB-UniRule"/>
</dbReference>
<dbReference type="GO" id="GO:0000287">
    <property type="term" value="F:magnesium ion binding"/>
    <property type="evidence" value="ECO:0007669"/>
    <property type="project" value="UniProtKB-UniRule"/>
</dbReference>
<dbReference type="GO" id="GO:0000105">
    <property type="term" value="P:L-histidine biosynthetic process"/>
    <property type="evidence" value="ECO:0007669"/>
    <property type="project" value="UniProtKB-UniRule"/>
</dbReference>
<dbReference type="CDD" id="cd13593">
    <property type="entry name" value="PBP2_HisGL3"/>
    <property type="match status" value="1"/>
</dbReference>
<dbReference type="Gene3D" id="3.40.190.10">
    <property type="entry name" value="Periplasmic binding protein-like II"/>
    <property type="match status" value="2"/>
</dbReference>
<dbReference type="HAMAP" id="MF_00079">
    <property type="entry name" value="HisG_Long"/>
    <property type="match status" value="1"/>
</dbReference>
<dbReference type="InterPro" id="IPR020621">
    <property type="entry name" value="ATP-PRT_HisG_long"/>
</dbReference>
<dbReference type="InterPro" id="IPR013820">
    <property type="entry name" value="ATP_PRibTrfase_cat"/>
</dbReference>
<dbReference type="InterPro" id="IPR018198">
    <property type="entry name" value="ATP_PRibTrfase_CS"/>
</dbReference>
<dbReference type="InterPro" id="IPR001348">
    <property type="entry name" value="ATP_PRibTrfase_HisG"/>
</dbReference>
<dbReference type="NCBIfam" id="TIGR00070">
    <property type="entry name" value="hisG"/>
    <property type="match status" value="1"/>
</dbReference>
<dbReference type="PANTHER" id="PTHR21403:SF8">
    <property type="entry name" value="ATP PHOSPHORIBOSYLTRANSFERASE"/>
    <property type="match status" value="1"/>
</dbReference>
<dbReference type="PANTHER" id="PTHR21403">
    <property type="entry name" value="ATP PHOSPHORIBOSYLTRANSFERASE ATP-PRTASE"/>
    <property type="match status" value="1"/>
</dbReference>
<dbReference type="Pfam" id="PF01634">
    <property type="entry name" value="HisG"/>
    <property type="match status" value="1"/>
</dbReference>
<dbReference type="SUPFAM" id="SSF53850">
    <property type="entry name" value="Periplasmic binding protein-like II"/>
    <property type="match status" value="1"/>
</dbReference>
<dbReference type="PROSITE" id="PS01316">
    <property type="entry name" value="ATP_P_PHORIBOSYLTR"/>
    <property type="match status" value="1"/>
</dbReference>
<evidence type="ECO:0000255" key="1">
    <source>
        <dbReference type="HAMAP-Rule" id="MF_00079"/>
    </source>
</evidence>
<reference key="1">
    <citation type="journal article" date="2010" name="J. Bacteriol.">
        <title>The genetic basis of laboratory adaptation in Caulobacter crescentus.</title>
        <authorList>
            <person name="Marks M.E."/>
            <person name="Castro-Rojas C.M."/>
            <person name="Teiling C."/>
            <person name="Du L."/>
            <person name="Kapatral V."/>
            <person name="Walunas T.L."/>
            <person name="Crosson S."/>
        </authorList>
    </citation>
    <scope>NUCLEOTIDE SEQUENCE [LARGE SCALE GENOMIC DNA]</scope>
    <source>
        <strain>NA1000 / CB15N</strain>
    </source>
</reference>
<organism>
    <name type="scientific">Caulobacter vibrioides (strain NA1000 / CB15N)</name>
    <name type="common">Caulobacter crescentus</name>
    <dbReference type="NCBI Taxonomy" id="565050"/>
    <lineage>
        <taxon>Bacteria</taxon>
        <taxon>Pseudomonadati</taxon>
        <taxon>Pseudomonadota</taxon>
        <taxon>Alphaproteobacteria</taxon>
        <taxon>Caulobacterales</taxon>
        <taxon>Caulobacteraceae</taxon>
        <taxon>Caulobacter</taxon>
    </lineage>
</organism>
<proteinExistence type="inferred from homology"/>
<sequence>MSTPMIFAIPSKGRLKDQVEAWLADCGFKLEMTGGARGYSAELSGLPGVSVRLLSAGDIAAGLDSGDLHLGVTGEDLLRERGDDMDSRVMLLRALGFGRADLVVTAPKNWLDVDTMADVDEVGHAHLARTGRRLRVATKYVTQTRAFFARHGVADYRIVESSGATEGAPAAGAAELVVDITTTGATLAANGLKILSDGVILKSQAQLTASLTAGWNGEQLDALRRLLSVVEAKGRAGKLATLVWPAEQDRAAQDAVAAFIARGGSRRANGALLATADLFDAAAALAEAGVEPVTVSRPDYVFESRSAVLDRFAEALKSKI</sequence>
<protein>
    <recommendedName>
        <fullName evidence="1">ATP phosphoribosyltransferase</fullName>
        <shortName evidence="1">ATP-PRT</shortName>
        <shortName evidence="1">ATP-PRTase</shortName>
        <ecNumber evidence="1">2.4.2.17</ecNumber>
    </recommendedName>
</protein>
<accession>B8H5P6</accession>